<comment type="function">
    <text evidence="1">Catalyzes the last step of tRNA splicing, the transfer of the splice junction 2'-phosphate from ligated tRNA to NAD to produce ADP-ribose 1''-2'' cyclic phosphate.</text>
</comment>
<comment type="catalytic activity">
    <reaction>
        <text>2'-phospho-[ligated tRNA] + NAD(+) = mature tRNA + ADP-alpha-D-ribose 1'',2''-cyclic phosphate + nicotinamide</text>
        <dbReference type="Rhea" id="RHEA:23324"/>
        <dbReference type="Rhea" id="RHEA-COMP:11106"/>
        <dbReference type="Rhea" id="RHEA-COMP:11107"/>
        <dbReference type="ChEBI" id="CHEBI:17154"/>
        <dbReference type="ChEBI" id="CHEBI:57540"/>
        <dbReference type="ChEBI" id="CHEBI:76596"/>
        <dbReference type="ChEBI" id="CHEBI:82883"/>
        <dbReference type="ChEBI" id="CHEBI:85027"/>
        <dbReference type="EC" id="2.7.1.160"/>
    </reaction>
</comment>
<comment type="similarity">
    <text evidence="3">Belongs to the KptA/TPT1 family.</text>
</comment>
<gene>
    <name type="ORF">SPAC2C4.12c</name>
</gene>
<feature type="chain" id="PRO_0000316237" description="Putative tRNA 2'-phosphotransferase">
    <location>
        <begin position="1"/>
        <end position="365"/>
    </location>
</feature>
<feature type="region of interest" description="Disordered" evidence="2">
    <location>
        <begin position="1"/>
        <end position="35"/>
    </location>
</feature>
<feature type="region of interest" description="Disordered" evidence="2">
    <location>
        <begin position="231"/>
        <end position="254"/>
    </location>
</feature>
<feature type="compositionally biased region" description="Low complexity" evidence="2">
    <location>
        <begin position="17"/>
        <end position="27"/>
    </location>
</feature>
<keyword id="KW-0520">NAD</keyword>
<keyword id="KW-1185">Reference proteome</keyword>
<keyword id="KW-0808">Transferase</keyword>
<keyword id="KW-0819">tRNA processing</keyword>
<sequence>MYKNMNSHELIEESNNSGTPATKSSSKPTKKIRPRNDLVHYSKALSKVLRHTAKANGLQIREDGYIEVDSILKLPQFRGMGMELLLSIVKGNDKKRFTMEEVEGVLYIRANQGHSIKAVQVPMARIDNASSIPKVVHGTKKELWPVISKQGLSRMKRNHIHCATGLYGDPGVISGIRKSCTLYIYIDSAKAMQDGVEFYRSENGVILTEGVNGLLSSKYFSRVETSDGEVLLDAKASPKNNRSDESDQSDPESIDPFCDNLQALSMHELELLEEKHSNFGYSEGIIKGKMQVAQSGFDDGFKHGSRLGFQMGKTIGTLKAKLYIFEENEQMEILKQELDRLQESAEFHIFVANHKEEILKCIREK</sequence>
<accession>O14045</accession>
<evidence type="ECO:0000250" key="1"/>
<evidence type="ECO:0000256" key="2">
    <source>
        <dbReference type="SAM" id="MobiDB-lite"/>
    </source>
</evidence>
<evidence type="ECO:0000305" key="3"/>
<organism>
    <name type="scientific">Schizosaccharomyces pombe (strain 972 / ATCC 24843)</name>
    <name type="common">Fission yeast</name>
    <dbReference type="NCBI Taxonomy" id="284812"/>
    <lineage>
        <taxon>Eukaryota</taxon>
        <taxon>Fungi</taxon>
        <taxon>Dikarya</taxon>
        <taxon>Ascomycota</taxon>
        <taxon>Taphrinomycotina</taxon>
        <taxon>Schizosaccharomycetes</taxon>
        <taxon>Schizosaccharomycetales</taxon>
        <taxon>Schizosaccharomycetaceae</taxon>
        <taxon>Schizosaccharomyces</taxon>
    </lineage>
</organism>
<protein>
    <recommendedName>
        <fullName>Putative tRNA 2'-phosphotransferase</fullName>
        <ecNumber>2.7.1.160</ecNumber>
    </recommendedName>
</protein>
<name>TPT1_SCHPO</name>
<reference key="1">
    <citation type="journal article" date="2002" name="Nature">
        <title>The genome sequence of Schizosaccharomyces pombe.</title>
        <authorList>
            <person name="Wood V."/>
            <person name="Gwilliam R."/>
            <person name="Rajandream M.A."/>
            <person name="Lyne M.H."/>
            <person name="Lyne R."/>
            <person name="Stewart A."/>
            <person name="Sgouros J.G."/>
            <person name="Peat N."/>
            <person name="Hayles J."/>
            <person name="Baker S.G."/>
            <person name="Basham D."/>
            <person name="Bowman S."/>
            <person name="Brooks K."/>
            <person name="Brown D."/>
            <person name="Brown S."/>
            <person name="Chillingworth T."/>
            <person name="Churcher C.M."/>
            <person name="Collins M."/>
            <person name="Connor R."/>
            <person name="Cronin A."/>
            <person name="Davis P."/>
            <person name="Feltwell T."/>
            <person name="Fraser A."/>
            <person name="Gentles S."/>
            <person name="Goble A."/>
            <person name="Hamlin N."/>
            <person name="Harris D.E."/>
            <person name="Hidalgo J."/>
            <person name="Hodgson G."/>
            <person name="Holroyd S."/>
            <person name="Hornsby T."/>
            <person name="Howarth S."/>
            <person name="Huckle E.J."/>
            <person name="Hunt S."/>
            <person name="Jagels K."/>
            <person name="James K.D."/>
            <person name="Jones L."/>
            <person name="Jones M."/>
            <person name="Leather S."/>
            <person name="McDonald S."/>
            <person name="McLean J."/>
            <person name="Mooney P."/>
            <person name="Moule S."/>
            <person name="Mungall K.L."/>
            <person name="Murphy L.D."/>
            <person name="Niblett D."/>
            <person name="Odell C."/>
            <person name="Oliver K."/>
            <person name="O'Neil S."/>
            <person name="Pearson D."/>
            <person name="Quail M.A."/>
            <person name="Rabbinowitsch E."/>
            <person name="Rutherford K.M."/>
            <person name="Rutter S."/>
            <person name="Saunders D."/>
            <person name="Seeger K."/>
            <person name="Sharp S."/>
            <person name="Skelton J."/>
            <person name="Simmonds M.N."/>
            <person name="Squares R."/>
            <person name="Squares S."/>
            <person name="Stevens K."/>
            <person name="Taylor K."/>
            <person name="Taylor R.G."/>
            <person name="Tivey A."/>
            <person name="Walsh S.V."/>
            <person name="Warren T."/>
            <person name="Whitehead S."/>
            <person name="Woodward J.R."/>
            <person name="Volckaert G."/>
            <person name="Aert R."/>
            <person name="Robben J."/>
            <person name="Grymonprez B."/>
            <person name="Weltjens I."/>
            <person name="Vanstreels E."/>
            <person name="Rieger M."/>
            <person name="Schaefer M."/>
            <person name="Mueller-Auer S."/>
            <person name="Gabel C."/>
            <person name="Fuchs M."/>
            <person name="Duesterhoeft A."/>
            <person name="Fritzc C."/>
            <person name="Holzer E."/>
            <person name="Moestl D."/>
            <person name="Hilbert H."/>
            <person name="Borzym K."/>
            <person name="Langer I."/>
            <person name="Beck A."/>
            <person name="Lehrach H."/>
            <person name="Reinhardt R."/>
            <person name="Pohl T.M."/>
            <person name="Eger P."/>
            <person name="Zimmermann W."/>
            <person name="Wedler H."/>
            <person name="Wambutt R."/>
            <person name="Purnelle B."/>
            <person name="Goffeau A."/>
            <person name="Cadieu E."/>
            <person name="Dreano S."/>
            <person name="Gloux S."/>
            <person name="Lelaure V."/>
            <person name="Mottier S."/>
            <person name="Galibert F."/>
            <person name="Aves S.J."/>
            <person name="Xiang Z."/>
            <person name="Hunt C."/>
            <person name="Moore K."/>
            <person name="Hurst S.M."/>
            <person name="Lucas M."/>
            <person name="Rochet M."/>
            <person name="Gaillardin C."/>
            <person name="Tallada V.A."/>
            <person name="Garzon A."/>
            <person name="Thode G."/>
            <person name="Daga R.R."/>
            <person name="Cruzado L."/>
            <person name="Jimenez J."/>
            <person name="Sanchez M."/>
            <person name="del Rey F."/>
            <person name="Benito J."/>
            <person name="Dominguez A."/>
            <person name="Revuelta J.L."/>
            <person name="Moreno S."/>
            <person name="Armstrong J."/>
            <person name="Forsburg S.L."/>
            <person name="Cerutti L."/>
            <person name="Lowe T."/>
            <person name="McCombie W.R."/>
            <person name="Paulsen I."/>
            <person name="Potashkin J."/>
            <person name="Shpakovski G.V."/>
            <person name="Ussery D."/>
            <person name="Barrell B.G."/>
            <person name="Nurse P."/>
        </authorList>
    </citation>
    <scope>NUCLEOTIDE SEQUENCE [LARGE SCALE GENOMIC DNA]</scope>
    <source>
        <strain>972 / ATCC 24843</strain>
    </source>
</reference>
<reference key="2">
    <citation type="journal article" date="2011" name="Science">
        <title>Comparative functional genomics of the fission yeasts.</title>
        <authorList>
            <person name="Rhind N."/>
            <person name="Chen Z."/>
            <person name="Yassour M."/>
            <person name="Thompson D.A."/>
            <person name="Haas B.J."/>
            <person name="Habib N."/>
            <person name="Wapinski I."/>
            <person name="Roy S."/>
            <person name="Lin M.F."/>
            <person name="Heiman D.I."/>
            <person name="Young S.K."/>
            <person name="Furuya K."/>
            <person name="Guo Y."/>
            <person name="Pidoux A."/>
            <person name="Chen H.M."/>
            <person name="Robbertse B."/>
            <person name="Goldberg J.M."/>
            <person name="Aoki K."/>
            <person name="Bayne E.H."/>
            <person name="Berlin A.M."/>
            <person name="Desjardins C.A."/>
            <person name="Dobbs E."/>
            <person name="Dukaj L."/>
            <person name="Fan L."/>
            <person name="FitzGerald M.G."/>
            <person name="French C."/>
            <person name="Gujja S."/>
            <person name="Hansen K."/>
            <person name="Keifenheim D."/>
            <person name="Levin J.Z."/>
            <person name="Mosher R.A."/>
            <person name="Mueller C.A."/>
            <person name="Pfiffner J."/>
            <person name="Priest M."/>
            <person name="Russ C."/>
            <person name="Smialowska A."/>
            <person name="Swoboda P."/>
            <person name="Sykes S.M."/>
            <person name="Vaughn M."/>
            <person name="Vengrova S."/>
            <person name="Yoder R."/>
            <person name="Zeng Q."/>
            <person name="Allshire R."/>
            <person name="Baulcombe D."/>
            <person name="Birren B.W."/>
            <person name="Brown W."/>
            <person name="Ekwall K."/>
            <person name="Kellis M."/>
            <person name="Leatherwood J."/>
            <person name="Levin H."/>
            <person name="Margalit H."/>
            <person name="Martienssen R."/>
            <person name="Nieduszynski C.A."/>
            <person name="Spatafora J.W."/>
            <person name="Friedman N."/>
            <person name="Dalgaard J.Z."/>
            <person name="Baumann P."/>
            <person name="Niki H."/>
            <person name="Regev A."/>
            <person name="Nusbaum C."/>
        </authorList>
    </citation>
    <scope>REVISION OF GENE MODEL</scope>
</reference>
<proteinExistence type="inferred from homology"/>
<dbReference type="EC" id="2.7.1.160"/>
<dbReference type="EMBL" id="CU329670">
    <property type="protein sequence ID" value="CAB16372.2"/>
    <property type="molecule type" value="Genomic_DNA"/>
</dbReference>
<dbReference type="PIR" id="T38523">
    <property type="entry name" value="T38523"/>
</dbReference>
<dbReference type="SMR" id="O14045"/>
<dbReference type="BioGRID" id="278069">
    <property type="interactions" value="1"/>
</dbReference>
<dbReference type="FunCoup" id="O14045">
    <property type="interactions" value="36"/>
</dbReference>
<dbReference type="STRING" id="284812.O14045"/>
<dbReference type="iPTMnet" id="O14045"/>
<dbReference type="PaxDb" id="4896-SPAC2C4.12c.1"/>
<dbReference type="EnsemblFungi" id="SPAC2C4.12c.1">
    <property type="protein sequence ID" value="SPAC2C4.12c.1:pep"/>
    <property type="gene ID" value="SPAC2C4.12c"/>
</dbReference>
<dbReference type="KEGG" id="spo:2541572"/>
<dbReference type="PomBase" id="SPAC2C4.12c"/>
<dbReference type="VEuPathDB" id="FungiDB:SPAC2C4.12c"/>
<dbReference type="eggNOG" id="KOG2278">
    <property type="taxonomic scope" value="Eukaryota"/>
</dbReference>
<dbReference type="eggNOG" id="KOG4774">
    <property type="taxonomic scope" value="Eukaryota"/>
</dbReference>
<dbReference type="HOGENOM" id="CLU_874815_0_0_1"/>
<dbReference type="InParanoid" id="O14045"/>
<dbReference type="OMA" id="MIRFSKA"/>
<dbReference type="PRO" id="PR:O14045"/>
<dbReference type="Proteomes" id="UP000002485">
    <property type="component" value="Chromosome I"/>
</dbReference>
<dbReference type="GO" id="GO:0005634">
    <property type="term" value="C:nucleus"/>
    <property type="evidence" value="ECO:0000250"/>
    <property type="project" value="PomBase"/>
</dbReference>
<dbReference type="GO" id="GO:0000215">
    <property type="term" value="F:tRNA 2'-phosphotransferase activity"/>
    <property type="evidence" value="ECO:0000318"/>
    <property type="project" value="GO_Central"/>
</dbReference>
<dbReference type="GO" id="GO:0006388">
    <property type="term" value="P:tRNA splicing, via endonucleolytic cleavage and ligation"/>
    <property type="evidence" value="ECO:0000318"/>
    <property type="project" value="GO_Central"/>
</dbReference>
<dbReference type="FunFam" id="3.20.170.30:FF:000002">
    <property type="entry name" value="Phosphotransferase, putative"/>
    <property type="match status" value="1"/>
</dbReference>
<dbReference type="FunFam" id="1.10.10.970:FF:000002">
    <property type="entry name" value="Tpt1p"/>
    <property type="match status" value="1"/>
</dbReference>
<dbReference type="Gene3D" id="3.20.170.30">
    <property type="match status" value="1"/>
</dbReference>
<dbReference type="Gene3D" id="1.10.10.970">
    <property type="entry name" value="RNA 2'-phosphotransferase, Tpt1/KptA family, N-terminal domain"/>
    <property type="match status" value="1"/>
</dbReference>
<dbReference type="InterPro" id="IPR019191">
    <property type="entry name" value="Essential_protein_Yae1_N"/>
</dbReference>
<dbReference type="InterPro" id="IPR002745">
    <property type="entry name" value="Ptrans_KptA/Tpt1"/>
</dbReference>
<dbReference type="InterPro" id="IPR042081">
    <property type="entry name" value="RNA_2'-PTrans_C"/>
</dbReference>
<dbReference type="InterPro" id="IPR042080">
    <property type="entry name" value="RNA_2'-PTrans_N"/>
</dbReference>
<dbReference type="PANTHER" id="PTHR12684">
    <property type="entry name" value="PUTATIVE PHOSPHOTRANSFERASE"/>
    <property type="match status" value="1"/>
</dbReference>
<dbReference type="PANTHER" id="PTHR12684:SF2">
    <property type="entry name" value="TRNA 2'-PHOSPHOTRANSFERASE 1"/>
    <property type="match status" value="1"/>
</dbReference>
<dbReference type="Pfam" id="PF01885">
    <property type="entry name" value="PTS_2-RNA"/>
    <property type="match status" value="1"/>
</dbReference>
<dbReference type="Pfam" id="PF09811">
    <property type="entry name" value="Yae1_N"/>
    <property type="match status" value="1"/>
</dbReference>
<dbReference type="SUPFAM" id="SSF56399">
    <property type="entry name" value="ADP-ribosylation"/>
    <property type="match status" value="1"/>
</dbReference>